<gene>
    <name evidence="1" type="primary">ruvC</name>
    <name type="ordered locus">ECIAI39_1186</name>
</gene>
<name>RUVC_ECO7I</name>
<organism>
    <name type="scientific">Escherichia coli O7:K1 (strain IAI39 / ExPEC)</name>
    <dbReference type="NCBI Taxonomy" id="585057"/>
    <lineage>
        <taxon>Bacteria</taxon>
        <taxon>Pseudomonadati</taxon>
        <taxon>Pseudomonadota</taxon>
        <taxon>Gammaproteobacteria</taxon>
        <taxon>Enterobacterales</taxon>
        <taxon>Enterobacteriaceae</taxon>
        <taxon>Escherichia</taxon>
    </lineage>
</organism>
<evidence type="ECO:0000255" key="1">
    <source>
        <dbReference type="HAMAP-Rule" id="MF_00034"/>
    </source>
</evidence>
<proteinExistence type="inferred from homology"/>
<comment type="function">
    <text evidence="1">The RuvA-RuvB-RuvC complex processes Holliday junction (HJ) DNA during genetic recombination and DNA repair. Endonuclease that resolves HJ intermediates. Cleaves cruciform DNA by making single-stranded nicks across the HJ at symmetrical positions within the homologous arms, yielding a 5'-phosphate and a 3'-hydroxyl group; requires a central core of homology in the junction. The consensus cleavage sequence is 5'-(A/T)TT(C/G)-3'. Cleavage occurs on the 3'-side of the TT dinucleotide at the point of strand exchange. HJ branch migration catalyzed by RuvA-RuvB allows RuvC to scan DNA until it finds its consensus sequence, where it cleaves and resolves the cruciform DNA.</text>
</comment>
<comment type="catalytic activity">
    <reaction evidence="1">
        <text>Endonucleolytic cleavage at a junction such as a reciprocal single-stranded crossover between two homologous DNA duplexes (Holliday junction).</text>
        <dbReference type="EC" id="3.1.21.10"/>
    </reaction>
</comment>
<comment type="cofactor">
    <cofactor evidence="1">
        <name>Mg(2+)</name>
        <dbReference type="ChEBI" id="CHEBI:18420"/>
    </cofactor>
    <text evidence="1">Binds 2 Mg(2+) ion per subunit.</text>
</comment>
<comment type="subunit">
    <text evidence="1">Homodimer which binds Holliday junction (HJ) DNA. The HJ becomes 2-fold symmetrical on binding to RuvC with unstacked arms; it has a different conformation from HJ DNA in complex with RuvA. In the full resolvosome a probable DNA-RuvA(4)-RuvB(12)-RuvC(2) complex forms which resolves the HJ.</text>
</comment>
<comment type="subcellular location">
    <subcellularLocation>
        <location evidence="1">Cytoplasm</location>
    </subcellularLocation>
</comment>
<comment type="similarity">
    <text evidence="1">Belongs to the RuvC family.</text>
</comment>
<keyword id="KW-0963">Cytoplasm</keyword>
<keyword id="KW-0227">DNA damage</keyword>
<keyword id="KW-0233">DNA recombination</keyword>
<keyword id="KW-0234">DNA repair</keyword>
<keyword id="KW-0238">DNA-binding</keyword>
<keyword id="KW-0255">Endonuclease</keyword>
<keyword id="KW-0378">Hydrolase</keyword>
<keyword id="KW-0460">Magnesium</keyword>
<keyword id="KW-0479">Metal-binding</keyword>
<keyword id="KW-0540">Nuclease</keyword>
<protein>
    <recommendedName>
        <fullName evidence="1">Crossover junction endodeoxyribonuclease RuvC</fullName>
        <ecNumber evidence="1">3.1.21.10</ecNumber>
    </recommendedName>
    <alternativeName>
        <fullName evidence="1">Holliday junction nuclease RuvC</fullName>
    </alternativeName>
    <alternativeName>
        <fullName evidence="1">Holliday junction resolvase RuvC</fullName>
    </alternativeName>
</protein>
<feature type="chain" id="PRO_1000195255" description="Crossover junction endodeoxyribonuclease RuvC">
    <location>
        <begin position="1"/>
        <end position="173"/>
    </location>
</feature>
<feature type="active site" evidence="1">
    <location>
        <position position="8"/>
    </location>
</feature>
<feature type="active site" evidence="1">
    <location>
        <position position="67"/>
    </location>
</feature>
<feature type="active site" evidence="1">
    <location>
        <position position="139"/>
    </location>
</feature>
<feature type="binding site" evidence="1">
    <location>
        <position position="8"/>
    </location>
    <ligand>
        <name>Mg(2+)</name>
        <dbReference type="ChEBI" id="CHEBI:18420"/>
        <label>1</label>
    </ligand>
</feature>
<feature type="binding site" evidence="1">
    <location>
        <position position="67"/>
    </location>
    <ligand>
        <name>Mg(2+)</name>
        <dbReference type="ChEBI" id="CHEBI:18420"/>
        <label>2</label>
    </ligand>
</feature>
<feature type="binding site" evidence="1">
    <location>
        <position position="139"/>
    </location>
    <ligand>
        <name>Mg(2+)</name>
        <dbReference type="ChEBI" id="CHEBI:18420"/>
        <label>1</label>
    </ligand>
</feature>
<dbReference type="EC" id="3.1.21.10" evidence="1"/>
<dbReference type="EMBL" id="CU928164">
    <property type="protein sequence ID" value="CAR17320.1"/>
    <property type="molecule type" value="Genomic_DNA"/>
</dbReference>
<dbReference type="RefSeq" id="WP_001295503.1">
    <property type="nucleotide sequence ID" value="NC_011750.1"/>
</dbReference>
<dbReference type="RefSeq" id="YP_002407194.1">
    <property type="nucleotide sequence ID" value="NC_011750.1"/>
</dbReference>
<dbReference type="SMR" id="B7NS55"/>
<dbReference type="STRING" id="585057.ECIAI39_1186"/>
<dbReference type="GeneID" id="89516631"/>
<dbReference type="KEGG" id="ect:ECIAI39_1186"/>
<dbReference type="PATRIC" id="fig|585057.6.peg.1243"/>
<dbReference type="HOGENOM" id="CLU_091257_2_1_6"/>
<dbReference type="Proteomes" id="UP000000749">
    <property type="component" value="Chromosome"/>
</dbReference>
<dbReference type="GO" id="GO:0005737">
    <property type="term" value="C:cytoplasm"/>
    <property type="evidence" value="ECO:0007669"/>
    <property type="project" value="UniProtKB-SubCell"/>
</dbReference>
<dbReference type="GO" id="GO:0048476">
    <property type="term" value="C:Holliday junction resolvase complex"/>
    <property type="evidence" value="ECO:0007669"/>
    <property type="project" value="UniProtKB-UniRule"/>
</dbReference>
<dbReference type="GO" id="GO:0008821">
    <property type="term" value="F:crossover junction DNA endonuclease activity"/>
    <property type="evidence" value="ECO:0007669"/>
    <property type="project" value="UniProtKB-UniRule"/>
</dbReference>
<dbReference type="GO" id="GO:0003677">
    <property type="term" value="F:DNA binding"/>
    <property type="evidence" value="ECO:0007669"/>
    <property type="project" value="UniProtKB-KW"/>
</dbReference>
<dbReference type="GO" id="GO:0000287">
    <property type="term" value="F:magnesium ion binding"/>
    <property type="evidence" value="ECO:0007669"/>
    <property type="project" value="UniProtKB-UniRule"/>
</dbReference>
<dbReference type="GO" id="GO:0006310">
    <property type="term" value="P:DNA recombination"/>
    <property type="evidence" value="ECO:0007669"/>
    <property type="project" value="UniProtKB-UniRule"/>
</dbReference>
<dbReference type="GO" id="GO:0006281">
    <property type="term" value="P:DNA repair"/>
    <property type="evidence" value="ECO:0007669"/>
    <property type="project" value="UniProtKB-UniRule"/>
</dbReference>
<dbReference type="CDD" id="cd16962">
    <property type="entry name" value="RuvC"/>
    <property type="match status" value="1"/>
</dbReference>
<dbReference type="FunFam" id="3.30.420.10:FF:000002">
    <property type="entry name" value="Crossover junction endodeoxyribonuclease RuvC"/>
    <property type="match status" value="1"/>
</dbReference>
<dbReference type="Gene3D" id="3.30.420.10">
    <property type="entry name" value="Ribonuclease H-like superfamily/Ribonuclease H"/>
    <property type="match status" value="1"/>
</dbReference>
<dbReference type="HAMAP" id="MF_00034">
    <property type="entry name" value="RuvC"/>
    <property type="match status" value="1"/>
</dbReference>
<dbReference type="InterPro" id="IPR012337">
    <property type="entry name" value="RNaseH-like_sf"/>
</dbReference>
<dbReference type="InterPro" id="IPR036397">
    <property type="entry name" value="RNaseH_sf"/>
</dbReference>
<dbReference type="InterPro" id="IPR020563">
    <property type="entry name" value="X-over_junc_endoDNase_Mg_BS"/>
</dbReference>
<dbReference type="InterPro" id="IPR002176">
    <property type="entry name" value="X-over_junc_endoDNase_RuvC"/>
</dbReference>
<dbReference type="NCBIfam" id="NF000711">
    <property type="entry name" value="PRK00039.2-1"/>
    <property type="match status" value="1"/>
</dbReference>
<dbReference type="NCBIfam" id="TIGR00228">
    <property type="entry name" value="ruvC"/>
    <property type="match status" value="1"/>
</dbReference>
<dbReference type="PANTHER" id="PTHR30194">
    <property type="entry name" value="CROSSOVER JUNCTION ENDODEOXYRIBONUCLEASE RUVC"/>
    <property type="match status" value="1"/>
</dbReference>
<dbReference type="PANTHER" id="PTHR30194:SF3">
    <property type="entry name" value="CROSSOVER JUNCTION ENDODEOXYRIBONUCLEASE RUVC"/>
    <property type="match status" value="1"/>
</dbReference>
<dbReference type="Pfam" id="PF02075">
    <property type="entry name" value="RuvC"/>
    <property type="match status" value="1"/>
</dbReference>
<dbReference type="PRINTS" id="PR00696">
    <property type="entry name" value="RSOLVASERUVC"/>
</dbReference>
<dbReference type="SUPFAM" id="SSF53098">
    <property type="entry name" value="Ribonuclease H-like"/>
    <property type="match status" value="1"/>
</dbReference>
<dbReference type="PROSITE" id="PS01321">
    <property type="entry name" value="RUVC"/>
    <property type="match status" value="1"/>
</dbReference>
<accession>B7NS55</accession>
<sequence length="173" mass="18747">MAIILGIDPGSRVTGYGVIRQVGRQLSYLGSGCIRTKVDDLPSRLKLIYAGVTEIITQFQPDYFAIEQVFMAKNADSALKLGQARGVAIVAAVNQELPVFEYAARQVKQTVVGIGSAEKSQVQHMVRTLLKLPANPQADAADALAIAITHCHVSQNAMQMSESRLNLARGRLR</sequence>
<reference key="1">
    <citation type="journal article" date="2009" name="PLoS Genet.">
        <title>Organised genome dynamics in the Escherichia coli species results in highly diverse adaptive paths.</title>
        <authorList>
            <person name="Touchon M."/>
            <person name="Hoede C."/>
            <person name="Tenaillon O."/>
            <person name="Barbe V."/>
            <person name="Baeriswyl S."/>
            <person name="Bidet P."/>
            <person name="Bingen E."/>
            <person name="Bonacorsi S."/>
            <person name="Bouchier C."/>
            <person name="Bouvet O."/>
            <person name="Calteau A."/>
            <person name="Chiapello H."/>
            <person name="Clermont O."/>
            <person name="Cruveiller S."/>
            <person name="Danchin A."/>
            <person name="Diard M."/>
            <person name="Dossat C."/>
            <person name="Karoui M.E."/>
            <person name="Frapy E."/>
            <person name="Garry L."/>
            <person name="Ghigo J.M."/>
            <person name="Gilles A.M."/>
            <person name="Johnson J."/>
            <person name="Le Bouguenec C."/>
            <person name="Lescat M."/>
            <person name="Mangenot S."/>
            <person name="Martinez-Jehanne V."/>
            <person name="Matic I."/>
            <person name="Nassif X."/>
            <person name="Oztas S."/>
            <person name="Petit M.A."/>
            <person name="Pichon C."/>
            <person name="Rouy Z."/>
            <person name="Ruf C.S."/>
            <person name="Schneider D."/>
            <person name="Tourret J."/>
            <person name="Vacherie B."/>
            <person name="Vallenet D."/>
            <person name="Medigue C."/>
            <person name="Rocha E.P.C."/>
            <person name="Denamur E."/>
        </authorList>
    </citation>
    <scope>NUCLEOTIDE SEQUENCE [LARGE SCALE GENOMIC DNA]</scope>
    <source>
        <strain>IAI39 / ExPEC</strain>
    </source>
</reference>